<name>PTH_NEIG1</name>
<gene>
    <name evidence="1" type="primary">pth</name>
    <name type="ordered locus">NGO_0379</name>
</gene>
<protein>
    <recommendedName>
        <fullName evidence="1">Peptidyl-tRNA hydrolase</fullName>
        <shortName evidence="1">Pth</shortName>
        <ecNumber evidence="1">3.1.1.29</ecNumber>
    </recommendedName>
</protein>
<feature type="chain" id="PRO_0000187781" description="Peptidyl-tRNA hydrolase">
    <location>
        <begin position="1"/>
        <end position="192"/>
    </location>
</feature>
<feature type="active site" description="Proton acceptor" evidence="1">
    <location>
        <position position="23"/>
    </location>
</feature>
<feature type="binding site" evidence="1">
    <location>
        <position position="18"/>
    </location>
    <ligand>
        <name>tRNA</name>
        <dbReference type="ChEBI" id="CHEBI:17843"/>
    </ligand>
</feature>
<feature type="binding site" evidence="1">
    <location>
        <position position="69"/>
    </location>
    <ligand>
        <name>tRNA</name>
        <dbReference type="ChEBI" id="CHEBI:17843"/>
    </ligand>
</feature>
<feature type="binding site" evidence="1">
    <location>
        <position position="71"/>
    </location>
    <ligand>
        <name>tRNA</name>
        <dbReference type="ChEBI" id="CHEBI:17843"/>
    </ligand>
</feature>
<feature type="binding site" evidence="1">
    <location>
        <position position="117"/>
    </location>
    <ligand>
        <name>tRNA</name>
        <dbReference type="ChEBI" id="CHEBI:17843"/>
    </ligand>
</feature>
<feature type="site" description="Discriminates between blocked and unblocked aminoacyl-tRNA" evidence="1">
    <location>
        <position position="13"/>
    </location>
</feature>
<feature type="site" description="Stabilizes the basic form of H active site to accept a proton" evidence="1">
    <location>
        <position position="96"/>
    </location>
</feature>
<proteinExistence type="inferred from homology"/>
<sequence>MSNTIKMVVGLGNPGKEYEQTRHNAGFWFLDELAWKWKASFKEEKKFFGEVARAALPDGDVWLLKPATFMNRSGQAVAALAQFYKIKPEEILVVHDELDIPCGRIKFKLGGGNGGHNGLKDIQAKLGTADYYRLRLGIGHPGDRNLVVGYVLNKPSAEHRRQIDDAVAKSLQAVPDIISGKWEEATRFLHSK</sequence>
<comment type="function">
    <text evidence="1">Hydrolyzes ribosome-free peptidyl-tRNAs (with 1 or more amino acids incorporated), which drop off the ribosome during protein synthesis, or as a result of ribosome stalling.</text>
</comment>
<comment type="function">
    <text evidence="1">Catalyzes the release of premature peptidyl moieties from peptidyl-tRNA molecules trapped in stalled 50S ribosomal subunits, and thus maintains levels of free tRNAs and 50S ribosomes.</text>
</comment>
<comment type="catalytic activity">
    <reaction evidence="1">
        <text>an N-acyl-L-alpha-aminoacyl-tRNA + H2O = an N-acyl-L-amino acid + a tRNA + H(+)</text>
        <dbReference type="Rhea" id="RHEA:54448"/>
        <dbReference type="Rhea" id="RHEA-COMP:10123"/>
        <dbReference type="Rhea" id="RHEA-COMP:13883"/>
        <dbReference type="ChEBI" id="CHEBI:15377"/>
        <dbReference type="ChEBI" id="CHEBI:15378"/>
        <dbReference type="ChEBI" id="CHEBI:59874"/>
        <dbReference type="ChEBI" id="CHEBI:78442"/>
        <dbReference type="ChEBI" id="CHEBI:138191"/>
        <dbReference type="EC" id="3.1.1.29"/>
    </reaction>
</comment>
<comment type="subunit">
    <text evidence="1">Monomer.</text>
</comment>
<comment type="subcellular location">
    <subcellularLocation>
        <location evidence="1">Cytoplasm</location>
    </subcellularLocation>
</comment>
<comment type="similarity">
    <text evidence="1">Belongs to the PTH family.</text>
</comment>
<keyword id="KW-0963">Cytoplasm</keyword>
<keyword id="KW-0378">Hydrolase</keyword>
<keyword id="KW-1185">Reference proteome</keyword>
<keyword id="KW-0694">RNA-binding</keyword>
<keyword id="KW-0820">tRNA-binding</keyword>
<dbReference type="EC" id="3.1.1.29" evidence="1"/>
<dbReference type="EMBL" id="AE004969">
    <property type="protein sequence ID" value="AAW89123.1"/>
    <property type="molecule type" value="Genomic_DNA"/>
</dbReference>
<dbReference type="RefSeq" id="WP_003687802.1">
    <property type="nucleotide sequence ID" value="NC_002946.2"/>
</dbReference>
<dbReference type="RefSeq" id="YP_207535.1">
    <property type="nucleotide sequence ID" value="NC_002946.2"/>
</dbReference>
<dbReference type="SMR" id="Q5F9L4"/>
<dbReference type="STRING" id="242231.NGO_0379"/>
<dbReference type="GeneID" id="66752718"/>
<dbReference type="KEGG" id="ngo:NGO_0379"/>
<dbReference type="PATRIC" id="fig|242231.10.peg.459"/>
<dbReference type="HOGENOM" id="CLU_062456_3_1_4"/>
<dbReference type="Proteomes" id="UP000000535">
    <property type="component" value="Chromosome"/>
</dbReference>
<dbReference type="GO" id="GO:0005737">
    <property type="term" value="C:cytoplasm"/>
    <property type="evidence" value="ECO:0007669"/>
    <property type="project" value="UniProtKB-SubCell"/>
</dbReference>
<dbReference type="GO" id="GO:0004045">
    <property type="term" value="F:peptidyl-tRNA hydrolase activity"/>
    <property type="evidence" value="ECO:0007669"/>
    <property type="project" value="UniProtKB-UniRule"/>
</dbReference>
<dbReference type="GO" id="GO:0000049">
    <property type="term" value="F:tRNA binding"/>
    <property type="evidence" value="ECO:0007669"/>
    <property type="project" value="UniProtKB-UniRule"/>
</dbReference>
<dbReference type="GO" id="GO:0006515">
    <property type="term" value="P:protein quality control for misfolded or incompletely synthesized proteins"/>
    <property type="evidence" value="ECO:0007669"/>
    <property type="project" value="UniProtKB-UniRule"/>
</dbReference>
<dbReference type="GO" id="GO:0072344">
    <property type="term" value="P:rescue of stalled ribosome"/>
    <property type="evidence" value="ECO:0007669"/>
    <property type="project" value="UniProtKB-UniRule"/>
</dbReference>
<dbReference type="CDD" id="cd00462">
    <property type="entry name" value="PTH"/>
    <property type="match status" value="1"/>
</dbReference>
<dbReference type="FunFam" id="3.40.50.1470:FF:000001">
    <property type="entry name" value="Peptidyl-tRNA hydrolase"/>
    <property type="match status" value="1"/>
</dbReference>
<dbReference type="Gene3D" id="3.40.50.1470">
    <property type="entry name" value="Peptidyl-tRNA hydrolase"/>
    <property type="match status" value="1"/>
</dbReference>
<dbReference type="HAMAP" id="MF_00083">
    <property type="entry name" value="Pept_tRNA_hydro_bact"/>
    <property type="match status" value="1"/>
</dbReference>
<dbReference type="InterPro" id="IPR001328">
    <property type="entry name" value="Pept_tRNA_hydro"/>
</dbReference>
<dbReference type="InterPro" id="IPR018171">
    <property type="entry name" value="Pept_tRNA_hydro_CS"/>
</dbReference>
<dbReference type="InterPro" id="IPR036416">
    <property type="entry name" value="Pept_tRNA_hydro_sf"/>
</dbReference>
<dbReference type="NCBIfam" id="TIGR00447">
    <property type="entry name" value="pth"/>
    <property type="match status" value="1"/>
</dbReference>
<dbReference type="PANTHER" id="PTHR17224">
    <property type="entry name" value="PEPTIDYL-TRNA HYDROLASE"/>
    <property type="match status" value="1"/>
</dbReference>
<dbReference type="PANTHER" id="PTHR17224:SF1">
    <property type="entry name" value="PEPTIDYL-TRNA HYDROLASE"/>
    <property type="match status" value="1"/>
</dbReference>
<dbReference type="Pfam" id="PF01195">
    <property type="entry name" value="Pept_tRNA_hydro"/>
    <property type="match status" value="1"/>
</dbReference>
<dbReference type="SUPFAM" id="SSF53178">
    <property type="entry name" value="Peptidyl-tRNA hydrolase-like"/>
    <property type="match status" value="1"/>
</dbReference>
<dbReference type="PROSITE" id="PS01195">
    <property type="entry name" value="PEPT_TRNA_HYDROL_1"/>
    <property type="match status" value="1"/>
</dbReference>
<dbReference type="PROSITE" id="PS01196">
    <property type="entry name" value="PEPT_TRNA_HYDROL_2"/>
    <property type="match status" value="1"/>
</dbReference>
<organism>
    <name type="scientific">Neisseria gonorrhoeae (strain ATCC 700825 / FA 1090)</name>
    <dbReference type="NCBI Taxonomy" id="242231"/>
    <lineage>
        <taxon>Bacteria</taxon>
        <taxon>Pseudomonadati</taxon>
        <taxon>Pseudomonadota</taxon>
        <taxon>Betaproteobacteria</taxon>
        <taxon>Neisseriales</taxon>
        <taxon>Neisseriaceae</taxon>
        <taxon>Neisseria</taxon>
    </lineage>
</organism>
<evidence type="ECO:0000255" key="1">
    <source>
        <dbReference type="HAMAP-Rule" id="MF_00083"/>
    </source>
</evidence>
<accession>Q5F9L4</accession>
<reference key="1">
    <citation type="submission" date="2003-03" db="EMBL/GenBank/DDBJ databases">
        <title>The complete genome sequence of Neisseria gonorrhoeae.</title>
        <authorList>
            <person name="Lewis L.A."/>
            <person name="Gillaspy A.F."/>
            <person name="McLaughlin R.E."/>
            <person name="Gipson M."/>
            <person name="Ducey T.F."/>
            <person name="Ownbey T."/>
            <person name="Hartman K."/>
            <person name="Nydick C."/>
            <person name="Carson M.B."/>
            <person name="Vaughn J."/>
            <person name="Thomson C."/>
            <person name="Song L."/>
            <person name="Lin S."/>
            <person name="Yuan X."/>
            <person name="Najar F."/>
            <person name="Zhan M."/>
            <person name="Ren Q."/>
            <person name="Zhu H."/>
            <person name="Qi S."/>
            <person name="Kenton S.M."/>
            <person name="Lai H."/>
            <person name="White J.D."/>
            <person name="Clifton S."/>
            <person name="Roe B.A."/>
            <person name="Dyer D.W."/>
        </authorList>
    </citation>
    <scope>NUCLEOTIDE SEQUENCE [LARGE SCALE GENOMIC DNA]</scope>
    <source>
        <strain>ATCC 700825 / FA 1090</strain>
    </source>
</reference>